<feature type="chain" id="PRO_0000323405" description="Large ribosomal subunit protein uL22">
    <location>
        <begin position="1"/>
        <end position="188"/>
    </location>
</feature>
<feature type="region of interest" description="Disordered" evidence="1">
    <location>
        <begin position="155"/>
        <end position="188"/>
    </location>
</feature>
<organism>
    <name type="scientific">Agriotes lineatus</name>
    <name type="common">Lined click beetle</name>
    <dbReference type="NCBI Taxonomy" id="292458"/>
    <lineage>
        <taxon>Eukaryota</taxon>
        <taxon>Metazoa</taxon>
        <taxon>Ecdysozoa</taxon>
        <taxon>Arthropoda</taxon>
        <taxon>Hexapoda</taxon>
        <taxon>Insecta</taxon>
        <taxon>Pterygota</taxon>
        <taxon>Neoptera</taxon>
        <taxon>Endopterygota</taxon>
        <taxon>Coleoptera</taxon>
        <taxon>Polyphaga</taxon>
        <taxon>Elateriformia</taxon>
        <taxon>Elateroidea</taxon>
        <taxon>Elateridae</taxon>
        <taxon>Elaterinae</taxon>
        <taxon>Agriotes</taxon>
    </lineage>
</organism>
<evidence type="ECO:0000256" key="1">
    <source>
        <dbReference type="SAM" id="MobiDB-lite"/>
    </source>
</evidence>
<evidence type="ECO:0000305" key="2"/>
<accession>Q4GXH7</accession>
<protein>
    <recommendedName>
        <fullName evidence="2">Large ribosomal subunit protein uL22</fullName>
    </recommendedName>
    <alternativeName>
        <fullName>60S ribosomal protein L17</fullName>
    </alternativeName>
</protein>
<comment type="similarity">
    <text evidence="2">Belongs to the universal ribosomal protein uL22 family.</text>
</comment>
<keyword id="KW-0687">Ribonucleoprotein</keyword>
<keyword id="KW-0689">Ribosomal protein</keyword>
<reference key="1">
    <citation type="submission" date="2005-07" db="EMBL/GenBank/DDBJ databases">
        <title>Ribosomal proteins of Coleoptera.</title>
        <authorList>
            <person name="Longhorn S.J."/>
            <person name="Vogler A.P."/>
        </authorList>
    </citation>
    <scope>NUCLEOTIDE SEQUENCE [MRNA]</scope>
</reference>
<gene>
    <name type="primary">RpL17</name>
</gene>
<sequence>MGRYSREPEIAAKSCKARGSNLRVHFKNTCETANAIRKMPLKRAVAYLKNVIGHKECVPFRRFNGGVGRCAQAKQWGTTQGRWPKKSAEFLLQMLRNAESNADYSGLDVDRLVIEHIQVNRAACLRRRTYRAHGRINPYMSSPCHIEMWLTEAESTPEGAKKGKKKKGTKDAVEKSSKRVKTAATAAH</sequence>
<proteinExistence type="evidence at transcript level"/>
<dbReference type="EMBL" id="AM049046">
    <property type="protein sequence ID" value="CAJ17285.1"/>
    <property type="molecule type" value="mRNA"/>
</dbReference>
<dbReference type="SMR" id="Q4GXH7"/>
<dbReference type="OrthoDB" id="10254664at2759"/>
<dbReference type="GO" id="GO:0022625">
    <property type="term" value="C:cytosolic large ribosomal subunit"/>
    <property type="evidence" value="ECO:0007669"/>
    <property type="project" value="TreeGrafter"/>
</dbReference>
<dbReference type="GO" id="GO:0003735">
    <property type="term" value="F:structural constituent of ribosome"/>
    <property type="evidence" value="ECO:0007669"/>
    <property type="project" value="InterPro"/>
</dbReference>
<dbReference type="GO" id="GO:0002181">
    <property type="term" value="P:cytoplasmic translation"/>
    <property type="evidence" value="ECO:0007669"/>
    <property type="project" value="TreeGrafter"/>
</dbReference>
<dbReference type="CDD" id="cd00336">
    <property type="entry name" value="Ribosomal_L22"/>
    <property type="match status" value="1"/>
</dbReference>
<dbReference type="FunFam" id="3.90.470.10:FF:000003">
    <property type="entry name" value="60S ribosomal protein L17"/>
    <property type="match status" value="1"/>
</dbReference>
<dbReference type="Gene3D" id="3.90.470.10">
    <property type="entry name" value="Ribosomal protein L22/L17"/>
    <property type="match status" value="1"/>
</dbReference>
<dbReference type="InterPro" id="IPR001063">
    <property type="entry name" value="Ribosomal_uL22"/>
</dbReference>
<dbReference type="InterPro" id="IPR018260">
    <property type="entry name" value="Ribosomal_uL22_CS"/>
</dbReference>
<dbReference type="InterPro" id="IPR005721">
    <property type="entry name" value="Ribosomal_uL22_euk/arc"/>
</dbReference>
<dbReference type="InterPro" id="IPR036394">
    <property type="entry name" value="Ribosomal_uL22_sf"/>
</dbReference>
<dbReference type="NCBIfam" id="TIGR01038">
    <property type="entry name" value="uL22_arch_euk"/>
    <property type="match status" value="1"/>
</dbReference>
<dbReference type="PANTHER" id="PTHR11593">
    <property type="entry name" value="60S RIBOSOMAL PROTEIN L17"/>
    <property type="match status" value="1"/>
</dbReference>
<dbReference type="PANTHER" id="PTHR11593:SF10">
    <property type="entry name" value="60S RIBOSOMAL PROTEIN L17"/>
    <property type="match status" value="1"/>
</dbReference>
<dbReference type="Pfam" id="PF00237">
    <property type="entry name" value="Ribosomal_L22"/>
    <property type="match status" value="1"/>
</dbReference>
<dbReference type="SUPFAM" id="SSF54843">
    <property type="entry name" value="Ribosomal protein L22"/>
    <property type="match status" value="1"/>
</dbReference>
<dbReference type="PROSITE" id="PS00464">
    <property type="entry name" value="RIBOSOMAL_L22"/>
    <property type="match status" value="1"/>
</dbReference>
<name>RL17_AGRLI</name>